<organism>
    <name type="scientific">Salmonella typhi</name>
    <dbReference type="NCBI Taxonomy" id="90370"/>
    <lineage>
        <taxon>Bacteria</taxon>
        <taxon>Pseudomonadati</taxon>
        <taxon>Pseudomonadota</taxon>
        <taxon>Gammaproteobacteria</taxon>
        <taxon>Enterobacterales</taxon>
        <taxon>Enterobacteriaceae</taxon>
        <taxon>Salmonella</taxon>
    </lineage>
</organism>
<name>TRHO_SALTI</name>
<gene>
    <name evidence="1" type="primary">trhO</name>
    <name type="synonym">yceA</name>
    <name type="ordered locus">STY1193</name>
    <name type="ordered locus">t1764</name>
</gene>
<keyword id="KW-0560">Oxidoreductase</keyword>
<keyword id="KW-0819">tRNA processing</keyword>
<accession>Q8Z7L5</accession>
<feature type="chain" id="PRO_0000161509" description="tRNA uridine(34) hydroxylase">
    <location>
        <begin position="1"/>
        <end position="350"/>
    </location>
</feature>
<feature type="domain" description="Rhodanese" evidence="1">
    <location>
        <begin position="146"/>
        <end position="240"/>
    </location>
</feature>
<feature type="region of interest" description="Disordered" evidence="2">
    <location>
        <begin position="319"/>
        <end position="350"/>
    </location>
</feature>
<feature type="compositionally biased region" description="Basic and acidic residues" evidence="2">
    <location>
        <begin position="319"/>
        <end position="328"/>
    </location>
</feature>
<feature type="active site" description="Cysteine persulfide intermediate" evidence="1">
    <location>
        <position position="200"/>
    </location>
</feature>
<comment type="function">
    <text evidence="1">Catalyzes oxygen-dependent 5-hydroxyuridine (ho5U) modification at position 34 in tRNAs.</text>
</comment>
<comment type="catalytic activity">
    <reaction evidence="1">
        <text>uridine(34) in tRNA + AH2 + O2 = 5-hydroxyuridine(34) in tRNA + A + H2O</text>
        <dbReference type="Rhea" id="RHEA:64224"/>
        <dbReference type="Rhea" id="RHEA-COMP:11727"/>
        <dbReference type="Rhea" id="RHEA-COMP:13381"/>
        <dbReference type="ChEBI" id="CHEBI:13193"/>
        <dbReference type="ChEBI" id="CHEBI:15377"/>
        <dbReference type="ChEBI" id="CHEBI:15379"/>
        <dbReference type="ChEBI" id="CHEBI:17499"/>
        <dbReference type="ChEBI" id="CHEBI:65315"/>
        <dbReference type="ChEBI" id="CHEBI:136877"/>
    </reaction>
</comment>
<comment type="similarity">
    <text evidence="1">Belongs to the TrhO family.</text>
</comment>
<reference key="1">
    <citation type="journal article" date="2001" name="Nature">
        <title>Complete genome sequence of a multiple drug resistant Salmonella enterica serovar Typhi CT18.</title>
        <authorList>
            <person name="Parkhill J."/>
            <person name="Dougan G."/>
            <person name="James K.D."/>
            <person name="Thomson N.R."/>
            <person name="Pickard D."/>
            <person name="Wain J."/>
            <person name="Churcher C.M."/>
            <person name="Mungall K.L."/>
            <person name="Bentley S.D."/>
            <person name="Holden M.T.G."/>
            <person name="Sebaihia M."/>
            <person name="Baker S."/>
            <person name="Basham D."/>
            <person name="Brooks K."/>
            <person name="Chillingworth T."/>
            <person name="Connerton P."/>
            <person name="Cronin A."/>
            <person name="Davis P."/>
            <person name="Davies R.M."/>
            <person name="Dowd L."/>
            <person name="White N."/>
            <person name="Farrar J."/>
            <person name="Feltwell T."/>
            <person name="Hamlin N."/>
            <person name="Haque A."/>
            <person name="Hien T.T."/>
            <person name="Holroyd S."/>
            <person name="Jagels K."/>
            <person name="Krogh A."/>
            <person name="Larsen T.S."/>
            <person name="Leather S."/>
            <person name="Moule S."/>
            <person name="O'Gaora P."/>
            <person name="Parry C."/>
            <person name="Quail M.A."/>
            <person name="Rutherford K.M."/>
            <person name="Simmonds M."/>
            <person name="Skelton J."/>
            <person name="Stevens K."/>
            <person name="Whitehead S."/>
            <person name="Barrell B.G."/>
        </authorList>
    </citation>
    <scope>NUCLEOTIDE SEQUENCE [LARGE SCALE GENOMIC DNA]</scope>
    <source>
        <strain>CT18</strain>
    </source>
</reference>
<reference key="2">
    <citation type="journal article" date="2003" name="J. Bacteriol.">
        <title>Comparative genomics of Salmonella enterica serovar Typhi strains Ty2 and CT18.</title>
        <authorList>
            <person name="Deng W."/>
            <person name="Liou S.-R."/>
            <person name="Plunkett G. III"/>
            <person name="Mayhew G.F."/>
            <person name="Rose D.J."/>
            <person name="Burland V."/>
            <person name="Kodoyianni V."/>
            <person name="Schwartz D.C."/>
            <person name="Blattner F.R."/>
        </authorList>
    </citation>
    <scope>NUCLEOTIDE SEQUENCE [LARGE SCALE GENOMIC DNA]</scope>
    <source>
        <strain>ATCC 700931 / Ty2</strain>
    </source>
</reference>
<sequence length="350" mass="39911">MPVLHNRISNDELKAKMLAESEPRTTISFYKYFTIASPQQTRDALYQVFTALDVFGRVYLAHEGINAQISVPQSKVETFRQQLYTFDPALDGVRLNIALEDDGKSFWVLRMKVRDRIVADGIDDPSFDASNVGDYLKAADVNAMLDDPDAVFIDMRNHYEYEVGHFENALEIPADTFREQLPKAVEMLREHADKKIVMYCTGGIRCEKASAWMKHNGFNKVWHIEGGIIEYARRAREQGLPVRFIGKNFVFDERMGERISDEVIAHCHQCGVSCDSHTNCKNDGCHLLFIQCPQCASKFNGCCSEQCCEELALPEEEQRRRRAGRENGNKIFNKSRGRLNSKLSIPDPAE</sequence>
<proteinExistence type="inferred from homology"/>
<protein>
    <recommendedName>
        <fullName evidence="1">tRNA uridine(34) hydroxylase</fullName>
        <ecNumber evidence="1">1.14.-.-</ecNumber>
    </recommendedName>
    <alternativeName>
        <fullName evidence="1">tRNA hydroxylation protein O</fullName>
    </alternativeName>
</protein>
<dbReference type="EC" id="1.14.-.-" evidence="1"/>
<dbReference type="EMBL" id="AL513382">
    <property type="protein sequence ID" value="CAD08280.1"/>
    <property type="molecule type" value="Genomic_DNA"/>
</dbReference>
<dbReference type="EMBL" id="AE014613">
    <property type="protein sequence ID" value="AAO69387.1"/>
    <property type="molecule type" value="Genomic_DNA"/>
</dbReference>
<dbReference type="RefSeq" id="NP_455650.1">
    <property type="nucleotide sequence ID" value="NC_003198.1"/>
</dbReference>
<dbReference type="RefSeq" id="WP_001144640.1">
    <property type="nucleotide sequence ID" value="NZ_WSUR01000018.1"/>
</dbReference>
<dbReference type="SMR" id="Q8Z7L5"/>
<dbReference type="STRING" id="220341.gene:17585160"/>
<dbReference type="KEGG" id="stt:t1764"/>
<dbReference type="KEGG" id="sty:STY1193"/>
<dbReference type="PATRIC" id="fig|220341.7.peg.1194"/>
<dbReference type="eggNOG" id="COG1054">
    <property type="taxonomic scope" value="Bacteria"/>
</dbReference>
<dbReference type="HOGENOM" id="CLU_038878_1_1_6"/>
<dbReference type="OMA" id="CDTHTNC"/>
<dbReference type="OrthoDB" id="9778326at2"/>
<dbReference type="Proteomes" id="UP000000541">
    <property type="component" value="Chromosome"/>
</dbReference>
<dbReference type="Proteomes" id="UP000002670">
    <property type="component" value="Chromosome"/>
</dbReference>
<dbReference type="GO" id="GO:0016705">
    <property type="term" value="F:oxidoreductase activity, acting on paired donors, with incorporation or reduction of molecular oxygen"/>
    <property type="evidence" value="ECO:0007669"/>
    <property type="project" value="UniProtKB-UniRule"/>
</dbReference>
<dbReference type="GO" id="GO:0006400">
    <property type="term" value="P:tRNA modification"/>
    <property type="evidence" value="ECO:0007669"/>
    <property type="project" value="UniProtKB-UniRule"/>
</dbReference>
<dbReference type="CDD" id="cd01518">
    <property type="entry name" value="RHOD_YceA"/>
    <property type="match status" value="1"/>
</dbReference>
<dbReference type="Gene3D" id="3.30.70.100">
    <property type="match status" value="1"/>
</dbReference>
<dbReference type="Gene3D" id="3.40.250.10">
    <property type="entry name" value="Rhodanese-like domain"/>
    <property type="match status" value="1"/>
</dbReference>
<dbReference type="HAMAP" id="MF_00469">
    <property type="entry name" value="TrhO"/>
    <property type="match status" value="1"/>
</dbReference>
<dbReference type="InterPro" id="IPR001763">
    <property type="entry name" value="Rhodanese-like_dom"/>
</dbReference>
<dbReference type="InterPro" id="IPR036873">
    <property type="entry name" value="Rhodanese-like_dom_sf"/>
</dbReference>
<dbReference type="InterPro" id="IPR022111">
    <property type="entry name" value="Rhodanese_C"/>
</dbReference>
<dbReference type="InterPro" id="IPR020936">
    <property type="entry name" value="TrhO"/>
</dbReference>
<dbReference type="InterPro" id="IPR040503">
    <property type="entry name" value="TRHO_N"/>
</dbReference>
<dbReference type="NCBIfam" id="NF001133">
    <property type="entry name" value="PRK00142.1-1"/>
    <property type="match status" value="1"/>
</dbReference>
<dbReference type="PANTHER" id="PTHR43846:SF1">
    <property type="entry name" value="TRNA URIDINE(34) HYDROXYLASE"/>
    <property type="match status" value="1"/>
</dbReference>
<dbReference type="PANTHER" id="PTHR43846">
    <property type="entry name" value="UPF0176 PROTEIN YCEA"/>
    <property type="match status" value="1"/>
</dbReference>
<dbReference type="Pfam" id="PF00581">
    <property type="entry name" value="Rhodanese"/>
    <property type="match status" value="1"/>
</dbReference>
<dbReference type="Pfam" id="PF12368">
    <property type="entry name" value="Rhodanese_C"/>
    <property type="match status" value="1"/>
</dbReference>
<dbReference type="Pfam" id="PF17773">
    <property type="entry name" value="UPF0176_N"/>
    <property type="match status" value="1"/>
</dbReference>
<dbReference type="SMART" id="SM00450">
    <property type="entry name" value="RHOD"/>
    <property type="match status" value="1"/>
</dbReference>
<dbReference type="SUPFAM" id="SSF52821">
    <property type="entry name" value="Rhodanese/Cell cycle control phosphatase"/>
    <property type="match status" value="1"/>
</dbReference>
<dbReference type="PROSITE" id="PS50206">
    <property type="entry name" value="RHODANESE_3"/>
    <property type="match status" value="1"/>
</dbReference>
<evidence type="ECO:0000255" key="1">
    <source>
        <dbReference type="HAMAP-Rule" id="MF_00469"/>
    </source>
</evidence>
<evidence type="ECO:0000256" key="2">
    <source>
        <dbReference type="SAM" id="MobiDB-lite"/>
    </source>
</evidence>